<sequence length="363" mass="42058">MFKRHKSLASERRRELISRGATRSILKDDMKNFHFLSQFILSAGPLKSTSAVKHSKTIHFEIEILDAQTKKQICIVDKVTQKSTIHDVKQKFHKACPQWYPSRVGLQLERGGPFLKDNLTIQSVAASSIVTLYFTDLGQQVSWTTVFLAEYTGPLLIYLLFYLRIPYIYNMKESSRRLCHPVVHLACFCHCIHYIRYLLETLFVHKVSSGHTSLKNLLKSCAFYWGFTSWIAYYINHPRYTPPSFGYRQVAISAINFLICEAGNHFINVVLSHPSHTGNNACFPSPNYNPFTWMFFLVSCPNYTYEIGSWISFTIMTQTLPVGIFTLLMSIQMSLWAKKKHKIYLKKFSSYMHRKSAMIPFIL</sequence>
<proteinExistence type="evidence at transcript level"/>
<organism>
    <name type="scientific">Bos taurus</name>
    <name type="common">Bovine</name>
    <dbReference type="NCBI Taxonomy" id="9913"/>
    <lineage>
        <taxon>Eukaryota</taxon>
        <taxon>Metazoa</taxon>
        <taxon>Chordata</taxon>
        <taxon>Craniata</taxon>
        <taxon>Vertebrata</taxon>
        <taxon>Euteleostomi</taxon>
        <taxon>Mammalia</taxon>
        <taxon>Eutheria</taxon>
        <taxon>Laurasiatheria</taxon>
        <taxon>Artiodactyla</taxon>
        <taxon>Ruminantia</taxon>
        <taxon>Pecora</taxon>
        <taxon>Bovidae</taxon>
        <taxon>Bovinae</taxon>
        <taxon>Bos</taxon>
    </lineage>
</organism>
<accession>Q3SZ89</accession>
<dbReference type="EC" id="1.3.1.-"/>
<dbReference type="EMBL" id="BC103046">
    <property type="protein sequence ID" value="AAI03047.1"/>
    <property type="molecule type" value="mRNA"/>
</dbReference>
<dbReference type="RefSeq" id="NP_001073793.1">
    <property type="nucleotide sequence ID" value="NM_001080324.2"/>
</dbReference>
<dbReference type="SMR" id="Q3SZ89"/>
<dbReference type="FunCoup" id="Q3SZ89">
    <property type="interactions" value="293"/>
</dbReference>
<dbReference type="STRING" id="9913.ENSBTAP00000034462"/>
<dbReference type="PaxDb" id="9913-ENSBTAP00000034462"/>
<dbReference type="Ensembl" id="ENSBTAT00000034572.3">
    <property type="protein sequence ID" value="ENSBTAP00000034462.2"/>
    <property type="gene ID" value="ENSBTAG00000024826.4"/>
</dbReference>
<dbReference type="GeneID" id="616643"/>
<dbReference type="KEGG" id="bta:616643"/>
<dbReference type="CTD" id="253017"/>
<dbReference type="VEuPathDB" id="HostDB:ENSBTAG00000024826"/>
<dbReference type="VGNC" id="VGNC:35731">
    <property type="gene designation" value="TECRL"/>
</dbReference>
<dbReference type="eggNOG" id="KOG1639">
    <property type="taxonomic scope" value="Eukaryota"/>
</dbReference>
<dbReference type="GeneTree" id="ENSGT00950000182886"/>
<dbReference type="HOGENOM" id="CLU_059260_1_0_1"/>
<dbReference type="InParanoid" id="Q3SZ89"/>
<dbReference type="OMA" id="RQVSWTT"/>
<dbReference type="OrthoDB" id="540503at2759"/>
<dbReference type="TreeFam" id="TF300908"/>
<dbReference type="Reactome" id="R-BTA-75876">
    <property type="pathway name" value="Synthesis of very long-chain fatty acyl-CoAs"/>
</dbReference>
<dbReference type="Proteomes" id="UP000009136">
    <property type="component" value="Chromosome 6"/>
</dbReference>
<dbReference type="Bgee" id="ENSBTAG00000024826">
    <property type="expression patterns" value="Expressed in cardiac ventricle and 29 other cell types or tissues"/>
</dbReference>
<dbReference type="GO" id="GO:0005783">
    <property type="term" value="C:endoplasmic reticulum"/>
    <property type="evidence" value="ECO:0007669"/>
    <property type="project" value="UniProtKB-SubCell"/>
</dbReference>
<dbReference type="GO" id="GO:0016020">
    <property type="term" value="C:membrane"/>
    <property type="evidence" value="ECO:0007669"/>
    <property type="project" value="UniProtKB-SubCell"/>
</dbReference>
<dbReference type="GO" id="GO:0016491">
    <property type="term" value="F:oxidoreductase activity"/>
    <property type="evidence" value="ECO:0000318"/>
    <property type="project" value="GO_Central"/>
</dbReference>
<dbReference type="GO" id="GO:0016627">
    <property type="term" value="F:oxidoreductase activity, acting on the CH-CH group of donors"/>
    <property type="evidence" value="ECO:0007669"/>
    <property type="project" value="InterPro"/>
</dbReference>
<dbReference type="GO" id="GO:0042761">
    <property type="term" value="P:very long-chain fatty acid biosynthetic process"/>
    <property type="evidence" value="ECO:0000318"/>
    <property type="project" value="GO_Central"/>
</dbReference>
<dbReference type="CDD" id="cd17125">
    <property type="entry name" value="Ubl_TECRL"/>
    <property type="match status" value="1"/>
</dbReference>
<dbReference type="FunFam" id="3.10.20.90:FF:000131">
    <property type="entry name" value="trans-2,3-enoyl-CoA reductase-like"/>
    <property type="match status" value="1"/>
</dbReference>
<dbReference type="Gene3D" id="3.10.20.90">
    <property type="entry name" value="Phosphatidylinositol 3-kinase Catalytic Subunit, Chain A, domain 1"/>
    <property type="match status" value="1"/>
</dbReference>
<dbReference type="InterPro" id="IPR001104">
    <property type="entry name" value="3-oxo-5_a-steroid_4-DH_C"/>
</dbReference>
<dbReference type="InterPro" id="IPR039357">
    <property type="entry name" value="SRD5A/TECR"/>
</dbReference>
<dbReference type="InterPro" id="IPR049127">
    <property type="entry name" value="TECR-like_N"/>
</dbReference>
<dbReference type="InterPro" id="IPR047822">
    <property type="entry name" value="TECRL_Ubl"/>
</dbReference>
<dbReference type="PANTHER" id="PTHR10556">
    <property type="entry name" value="3-OXO-5-ALPHA-STEROID 4-DEHYDROGENASE"/>
    <property type="match status" value="1"/>
</dbReference>
<dbReference type="PANTHER" id="PTHR10556:SF27">
    <property type="entry name" value="TRANS-2,3-ENOYL-COA REDUCTASE-LIKE"/>
    <property type="match status" value="1"/>
</dbReference>
<dbReference type="Pfam" id="PF02544">
    <property type="entry name" value="Steroid_dh"/>
    <property type="match status" value="1"/>
</dbReference>
<dbReference type="Pfam" id="PF21696">
    <property type="entry name" value="TECR_N"/>
    <property type="match status" value="1"/>
</dbReference>
<dbReference type="PROSITE" id="PS50244">
    <property type="entry name" value="S5A_REDUCTASE"/>
    <property type="match status" value="1"/>
</dbReference>
<comment type="subcellular location">
    <subcellularLocation>
        <location evidence="4">Membrane</location>
        <topology evidence="4">Multi-pass membrane protein</topology>
    </subcellularLocation>
    <subcellularLocation>
        <location evidence="1">Endoplasmic reticulum</location>
    </subcellularLocation>
</comment>
<comment type="similarity">
    <text evidence="4">Belongs to the steroid 5-alpha reductase family.</text>
</comment>
<name>TECRL_BOVIN</name>
<protein>
    <recommendedName>
        <fullName>Trans-2,3-enoyl-CoA reductase-like</fullName>
        <ecNumber>1.3.1.-</ecNumber>
    </recommendedName>
    <alternativeName>
        <fullName>Steroid 5-alpha-reductase 2-like 2 protein</fullName>
    </alternativeName>
</protein>
<feature type="chain" id="PRO_0000317712" description="Trans-2,3-enoyl-CoA reductase-like">
    <location>
        <begin position="1"/>
        <end position="363"/>
    </location>
</feature>
<feature type="transmembrane region" description="Helical" evidence="3">
    <location>
        <begin position="143"/>
        <end position="163"/>
    </location>
</feature>
<feature type="transmembrane region" description="Helical" evidence="3">
    <location>
        <begin position="216"/>
        <end position="235"/>
    </location>
</feature>
<feature type="transmembrane region" description="Helical" evidence="3">
    <location>
        <begin position="250"/>
        <end position="270"/>
    </location>
</feature>
<feature type="transmembrane region" description="Helical" evidence="3">
    <location>
        <begin position="311"/>
        <end position="331"/>
    </location>
</feature>
<feature type="modified residue" description="Phosphoserine" evidence="2">
    <location>
        <position position="37"/>
    </location>
</feature>
<evidence type="ECO:0000250" key="1">
    <source>
        <dbReference type="UniProtKB" id="Q5HYJ1"/>
    </source>
</evidence>
<evidence type="ECO:0000250" key="2">
    <source>
        <dbReference type="UniProtKB" id="Q8BFZ1"/>
    </source>
</evidence>
<evidence type="ECO:0000255" key="3"/>
<evidence type="ECO:0000305" key="4"/>
<gene>
    <name type="primary">TECRL</name>
    <name type="synonym">SRD5A2L2</name>
</gene>
<reference key="1">
    <citation type="submission" date="2005-08" db="EMBL/GenBank/DDBJ databases">
        <authorList>
            <consortium name="NIH - Mammalian Gene Collection (MGC) project"/>
        </authorList>
    </citation>
    <scope>NUCLEOTIDE SEQUENCE [LARGE SCALE MRNA]</scope>
    <source>
        <strain>Hereford</strain>
        <tissue>Heart ventricle</tissue>
    </source>
</reference>
<keyword id="KW-0256">Endoplasmic reticulum</keyword>
<keyword id="KW-0472">Membrane</keyword>
<keyword id="KW-0560">Oxidoreductase</keyword>
<keyword id="KW-0597">Phosphoprotein</keyword>
<keyword id="KW-1185">Reference proteome</keyword>
<keyword id="KW-0812">Transmembrane</keyword>
<keyword id="KW-1133">Transmembrane helix</keyword>